<keyword id="KW-0903">Direct protein sequencing</keyword>
<keyword id="KW-0326">Glycosidase</keyword>
<keyword id="KW-0378">Hydrolase</keyword>
<keyword id="KW-0611">Plant defense</keyword>
<keyword id="KW-1185">Reference proteome</keyword>
<keyword id="KW-0732">Signal</keyword>
<keyword id="KW-0926">Vacuole</keyword>
<comment type="function">
    <text>Is thought to be an important plant defense-related product against fungal pathogens. Accumulation of the glucanase can be detected as early as 4 hours after inoculation.</text>
</comment>
<comment type="catalytic activity">
    <reaction>
        <text>Hydrolysis of (1-&gt;3)-beta-D-glucosidic linkages in (1-&gt;3)-beta-D-glucans.</text>
        <dbReference type="EC" id="3.2.1.39"/>
    </reaction>
</comment>
<comment type="subcellular location">
    <subcellularLocation>
        <location>Vacuole</location>
    </subcellularLocation>
    <text>In intact tissues.</text>
</comment>
<comment type="induction">
    <text>Following incompatible or compatible interaction with pathogenic bacteria, but not by wounding or salicylic acid. The induction is localized and does not seem to result from a systemic response. Induction occurs more rapidly with an incompatible interaction.</text>
</comment>
<comment type="PTM">
    <text>The N-terminus is blocked.</text>
</comment>
<comment type="similarity">
    <text evidence="3">Belongs to the glycosyl hydrolase 17 family.</text>
</comment>
<accession>P49236</accession>
<feature type="signal peptide" evidence="1">
    <location>
        <begin position="1"/>
        <end position="26"/>
    </location>
</feature>
<feature type="chain" id="PRO_0000011842" description="Glucan endo-1,3-beta-glucosidase">
    <location>
        <begin position="27"/>
        <end position="342"/>
    </location>
</feature>
<feature type="active site" description="Proton donor" evidence="2">
    <location>
        <position position="119"/>
    </location>
</feature>
<feature type="active site" description="Nucleophile" evidence="2">
    <location>
        <position position="261"/>
    </location>
</feature>
<name>E13B_BRACM</name>
<reference key="1">
    <citation type="journal article" date="1994" name="Mol. Plant Microbe Interact.">
        <title>Defense-related gene induction in Brassica campestris in response to defined mutants of Xanthomonas campestris with altered pathogenicity.</title>
        <authorList>
            <person name="Newman M.-A."/>
            <person name="Conrads-Strauch J."/>
            <person name="Scofield G."/>
            <person name="Daniels M.J."/>
            <person name="Dow J.M."/>
        </authorList>
    </citation>
    <scope>NUCLEOTIDE SEQUENCE [MRNA]</scope>
    <scope>PROTEIN SEQUENCE OF 99-117</scope>
    <source>
        <strain>cv. Just Right</strain>
        <tissue>Leaf</tissue>
    </source>
</reference>
<sequence length="342" mass="38180">MLASSPMLLFLLSLLMAYNFDTTAGQIGVCFGQMGNNIPNPSEVVAMFKQYSIPRMRMYGPNPDALNALRGSNIEFILDVPNGDLKRLADSQAEANTWVRDNVQKYNDVRFKYISVGNEVKPGEPGAAALIQAMQNIDRALSAAGLSNIKVSTTTFMGPSRNTYPPSRGRFKDEYRNFLQPVIGFLVNKRSPLLVNIYTYFGYMNRDVSLQFALLQPNSNNEFTDPNNQLRYLNFFDANLDSVYAALEKSGGGSLDVVVSESGWPTQGGPGASVPNAEAYVNNLRLHVNKNGSPKRQEAIETYIFAMFDEAPRQTSPNDEYEKYWGMFSPTTRQLKYGVKFN</sequence>
<proteinExistence type="evidence at protein level"/>
<protein>
    <recommendedName>
        <fullName>Glucan endo-1,3-beta-glucosidase</fullName>
        <ecNumber>3.2.1.39</ecNumber>
    </recommendedName>
    <alternativeName>
        <fullName>(1-&gt;3)-beta-glucan endohydrolase</fullName>
        <shortName>(1-&gt;3)-beta-glucanase</shortName>
    </alternativeName>
    <alternativeName>
        <fullName>Beta-1,3-endoglucanase</fullName>
    </alternativeName>
</protein>
<dbReference type="EC" id="3.2.1.39"/>
<dbReference type="EMBL" id="X77990">
    <property type="protein sequence ID" value="CAA54952.1"/>
    <property type="molecule type" value="mRNA"/>
</dbReference>
<dbReference type="PIR" id="S42885">
    <property type="entry name" value="S42885"/>
</dbReference>
<dbReference type="SMR" id="P49236"/>
<dbReference type="CAZy" id="GH17">
    <property type="family name" value="Glycoside Hydrolase Family 17"/>
</dbReference>
<dbReference type="Proteomes" id="UP000011750">
    <property type="component" value="Unplaced"/>
</dbReference>
<dbReference type="GO" id="GO:0005773">
    <property type="term" value="C:vacuole"/>
    <property type="evidence" value="ECO:0007669"/>
    <property type="project" value="UniProtKB-SubCell"/>
</dbReference>
<dbReference type="GO" id="GO:0042973">
    <property type="term" value="F:glucan endo-1,3-beta-D-glucosidase activity"/>
    <property type="evidence" value="ECO:0007669"/>
    <property type="project" value="UniProtKB-EC"/>
</dbReference>
<dbReference type="GO" id="GO:0005975">
    <property type="term" value="P:carbohydrate metabolic process"/>
    <property type="evidence" value="ECO:0007669"/>
    <property type="project" value="InterPro"/>
</dbReference>
<dbReference type="GO" id="GO:0006952">
    <property type="term" value="P:defense response"/>
    <property type="evidence" value="ECO:0007669"/>
    <property type="project" value="UniProtKB-KW"/>
</dbReference>
<dbReference type="CDD" id="cd00448">
    <property type="entry name" value="YjgF_YER057c_UK114_family"/>
    <property type="match status" value="1"/>
</dbReference>
<dbReference type="FunFam" id="3.20.20.80:FF:000010">
    <property type="entry name" value="glucan endo-1,3-beta-glucosidase, basic"/>
    <property type="match status" value="1"/>
</dbReference>
<dbReference type="Gene3D" id="3.20.20.80">
    <property type="entry name" value="Glycosidases"/>
    <property type="match status" value="1"/>
</dbReference>
<dbReference type="InterPro" id="IPR000490">
    <property type="entry name" value="Glyco_hydro_17"/>
</dbReference>
<dbReference type="InterPro" id="IPR044965">
    <property type="entry name" value="Glyco_hydro_17_plant"/>
</dbReference>
<dbReference type="InterPro" id="IPR017853">
    <property type="entry name" value="Glycoside_hydrolase_SF"/>
</dbReference>
<dbReference type="PANTHER" id="PTHR32227">
    <property type="entry name" value="GLUCAN ENDO-1,3-BETA-GLUCOSIDASE BG1-RELATED-RELATED"/>
    <property type="match status" value="1"/>
</dbReference>
<dbReference type="Pfam" id="PF00332">
    <property type="entry name" value="Glyco_hydro_17"/>
    <property type="match status" value="1"/>
</dbReference>
<dbReference type="SUPFAM" id="SSF51445">
    <property type="entry name" value="(Trans)glycosidases"/>
    <property type="match status" value="1"/>
</dbReference>
<dbReference type="PROSITE" id="PS00587">
    <property type="entry name" value="GLYCOSYL_HYDROL_F17"/>
    <property type="match status" value="1"/>
</dbReference>
<evidence type="ECO:0000250" key="1"/>
<evidence type="ECO:0000250" key="2">
    <source>
        <dbReference type="UniProtKB" id="O22317"/>
    </source>
</evidence>
<evidence type="ECO:0000305" key="3"/>
<organism>
    <name type="scientific">Brassica campestris</name>
    <name type="common">Field mustard</name>
    <dbReference type="NCBI Taxonomy" id="3711"/>
    <lineage>
        <taxon>Eukaryota</taxon>
        <taxon>Viridiplantae</taxon>
        <taxon>Streptophyta</taxon>
        <taxon>Embryophyta</taxon>
        <taxon>Tracheophyta</taxon>
        <taxon>Spermatophyta</taxon>
        <taxon>Magnoliopsida</taxon>
        <taxon>eudicotyledons</taxon>
        <taxon>Gunneridae</taxon>
        <taxon>Pentapetalae</taxon>
        <taxon>rosids</taxon>
        <taxon>malvids</taxon>
        <taxon>Brassicales</taxon>
        <taxon>Brassicaceae</taxon>
        <taxon>Brassiceae</taxon>
        <taxon>Brassica</taxon>
    </lineage>
</organism>
<gene>
    <name type="primary">BGL</name>
</gene>